<proteinExistence type="inferred from homology"/>
<reference key="1">
    <citation type="journal article" date="2010" name="Mol. Phylogenet. Evol.">
        <title>Evolution of Conus peptide toxins: analysis of Conus californicus Reeve, 1844.</title>
        <authorList>
            <person name="Biggs J.S."/>
            <person name="Watkins M."/>
            <person name="Puillandre N."/>
            <person name="Ownby J.P."/>
            <person name="Lopez-Vera E."/>
            <person name="Christensen S."/>
            <person name="Moreno K.J."/>
            <person name="Bernaldez J."/>
            <person name="Licea-Navarro A."/>
            <person name="Corneli P.S."/>
            <person name="Olivera B.M."/>
        </authorList>
    </citation>
    <scope>NUCLEOTIDE SEQUENCE [GENOMIC DNA]</scope>
</reference>
<name>CX53_CONCL</name>
<feature type="peptide" id="PRO_0000414966" description="Conotoxin Cl5.3">
    <location>
        <begin position="1"/>
        <end position="27"/>
    </location>
</feature>
<dbReference type="EMBL" id="FJ959141">
    <property type="protein sequence ID" value="ADB93111.1"/>
    <property type="molecule type" value="Genomic_DNA"/>
</dbReference>
<dbReference type="ConoServer" id="4026">
    <property type="toxin name" value="Cal5.3 precursor"/>
</dbReference>
<dbReference type="GO" id="GO:0005576">
    <property type="term" value="C:extracellular region"/>
    <property type="evidence" value="ECO:0007669"/>
    <property type="project" value="UniProtKB-SubCell"/>
</dbReference>
<dbReference type="GO" id="GO:0090729">
    <property type="term" value="F:toxin activity"/>
    <property type="evidence" value="ECO:0007669"/>
    <property type="project" value="UniProtKB-KW"/>
</dbReference>
<protein>
    <recommendedName>
        <fullName evidence="1">Conotoxin Cl5.3</fullName>
    </recommendedName>
</protein>
<evidence type="ECO:0000303" key="1">
    <source>
    </source>
</evidence>
<evidence type="ECO:0000305" key="2"/>
<evidence type="ECO:0000305" key="3">
    <source>
    </source>
</evidence>
<organism>
    <name type="scientific">Californiconus californicus</name>
    <name type="common">California cone</name>
    <name type="synonym">Conus californicus</name>
    <dbReference type="NCBI Taxonomy" id="1736779"/>
    <lineage>
        <taxon>Eukaryota</taxon>
        <taxon>Metazoa</taxon>
        <taxon>Spiralia</taxon>
        <taxon>Lophotrochozoa</taxon>
        <taxon>Mollusca</taxon>
        <taxon>Gastropoda</taxon>
        <taxon>Caenogastropoda</taxon>
        <taxon>Neogastropoda</taxon>
        <taxon>Conoidea</taxon>
        <taxon>Conidae</taxon>
        <taxon>Californiconus</taxon>
    </lineage>
</organism>
<keyword id="KW-1015">Disulfide bond</keyword>
<keyword id="KW-0528">Neurotoxin</keyword>
<keyword id="KW-0964">Secreted</keyword>
<keyword id="KW-0800">Toxin</keyword>
<comment type="subcellular location">
    <subcellularLocation>
        <location evidence="3">Secreted</location>
    </subcellularLocation>
</comment>
<comment type="tissue specificity">
    <text evidence="3">Expressed by the venom duct.</text>
</comment>
<comment type="domain">
    <text evidence="2">The cysteine framework is V (CC-CC).</text>
</comment>
<comment type="PTM">
    <text evidence="2">Contains 2 disulfide bonds that can be either 'C1-C3, C2-C4' or 'C1-C4, C2-C3', since these disulfide connectivities have been observed for conotoxins with cysteine framework V (for examples, see AC P0DQQ7 and AC P81755).</text>
</comment>
<comment type="similarity">
    <text evidence="2">Belongs to the conotoxin T superfamily.</text>
</comment>
<sequence>NSEDGSPYPGPGQQPNCCKWPIVTCCNR</sequence>
<accession>D6C4J9</accession>